<sequence>MESRDPAQPMSPGEATQSGARPADRYGLLKHSREFLDFFWDIAKPEQETRLAATEKLLEYLRGRPKGSEMKYALKRLITGLGVGRETARPCYSLALAQLLQSFEDLPLCSILQQIQEKYDLHQVKKAMLRPALFANLFGVLALFQSGRLVKDQEALMKSVKLLQALAQYQNHLQEQPRKALVDILSEVSKATLQEILPEVLKADLNIILSSPEQLELFLLAQQKVPSKLKKLVGSVNLFSDENVPRLVNVLKMAASSVKKDRKLPAIALDLLRLALKEDKFPRFWKEVVEQGLLKMQFWPASYLCFRLLGAALPLLTKEQLHLVMQGDVIRHYGEHVCTAKLPKQFKFAPEMDDYVGTFLEGCQDDPERQLAVLVAFSSVTNQGLPVTPTFWRVVRFLSPPALQGYVAWLRAMFLQPDLDSLVDFSTNNQKKAQDSSLHMPERAVFRLRKWIIFRLVSIVDSLHLEMEEALTEQVARFCLFHSFFVTKKPTSQIPETKHPFSFPLENQAREAVSSAFFSLLQTLSTQFKQAPGQTQGGQPWTYHLVQFADLLLNHSHNVTTVTPFTAQQRQAWDRMLQTLKELEAHSAEARAAAFQHLLLLVGIHLLKSPAESCDLLGDIQTCIRKSLGEKPRRSRTKTIDPQEPPWVEVLVEILLALLAQPSHLMRQVARSVFGHICSHLTPRALQLILDVLNPETSEDENDRVVVTDDSDERRLKGAEDKSEEGEDNRSSESEEESEGEESEEEERDGDVDQGFREQLMTVLQAGKALGGEDSENEEELGDEAMMALDQSLASLFAEQKLRIQARRDEKNKLQKEKALRRDFQIRVLDLVEVLVTKQPENALVLELLEPLLSIIRRSLRSSSSKQEQDLLHKTARIFTHHLCRARRYCHDLGERAGALHAQVERLVQQAGRQPDSPTALYHFNASLYLLRVLKGNTAEGCVHETQEKQKAGTDPSHMPTGPQAASCLDLNLVTRVYSTALSSFLTKRNSPLTVPMFLSLFSRHPVLCQSLLPILVQHITGPVRPRHQACLLLQKTLSMREVRSCFEDPEWKQLMGQVLAKVTENLRVLGEAQTKAQHQQALSSLELLNVLFRTCKHEKLTLDLTVLLGVLQGQQQSLQQGAHSTGSSRLHDLYWQAMKTLGVQRPKLEKKDAKEIPSATQSPISKKRKKKGFLPETKKRKKRKSEDGTPAEDGTPAATGGSQPPSMGRKKRNRTKAKVPAQANGTPTTKSPAPGAPTRSPSTPAKSPKLQKKNQKPSQVNGAPGSPTEPAGQKQHQKALPKKGVLGKSPLSALARKKARLSLVIRSPSLLQSGAKKKAQVRKAGKP</sequence>
<comment type="function">
    <text evidence="1 5">May activate or repress transcription via interactions with sequence specific DNA-binding proteins (By similarity). Repression may be mediated at least in part by histone deacetylase activity (HDAC activity) (By similarity). Acts as a corepressor and in concert with CRY1, represses the transcription of the core circadian clock component PER2 (By similarity). Preferentially binds to dimethylated histone H3 'Lys-9' (H3K9me2) on the PER2 promoter (By similarity). Has a role in rRNA biogenesis together with PWP1 (PubMed:29065309).</text>
</comment>
<comment type="subunit">
    <text evidence="1 4">Binds to and represses JUN and MYB via the leucine zipper regions present in these proteins. Also binds to and represses PPARGC1A: this interaction is abrogated when PPARGC1A is phosphorylated by MAPK1/ERK. Binds to and stimulates transcription by AHR. Binds to KPNA2. Interacts with CLOCK and CRY1 (By similarity). Component of the B-WICH complex, at least composed of SMARCA5/SNF2H, BAZ1B/WSTF, SF3B1, DEK, MYO1C, ERCC6, MYBBP1A and DDX21.</text>
</comment>
<comment type="subcellular location">
    <subcellularLocation>
        <location evidence="3">Cytoplasm</location>
    </subcellularLocation>
    <subcellularLocation>
        <location evidence="3">Nucleus</location>
    </subcellularLocation>
    <subcellularLocation>
        <location evidence="3">Nucleus</location>
        <location evidence="3">Nucleolus</location>
    </subcellularLocation>
    <text evidence="1">Shuttles between the nucleus and cytoplasm. Nuclear import may be mediated by KPNA2, while export appears to depend partially on XPO1/CRM1 (By similarity). Predominantly nucleolar.</text>
</comment>
<comment type="alternative products">
    <event type="alternative splicing"/>
    <isoform>
        <id>Q9BQG0-1</id>
        <name>1</name>
        <sequence type="displayed"/>
    </isoform>
    <isoform>
        <id>Q9BQG0-2</id>
        <name>2</name>
        <sequence type="described" ref="VSP_014786"/>
    </isoform>
</comment>
<comment type="PTM">
    <text evidence="1">Citrullinated by PADI4.</text>
</comment>
<comment type="miscellaneous">
    <molecule>Isoform 2</molecule>
    <text evidence="7">May be due to competing donor and acceptor splice sites.</text>
</comment>
<comment type="similarity">
    <text evidence="7">Belongs to the MYBBP1A family.</text>
</comment>
<comment type="sequence caution" evidence="7">
    <conflict type="erroneous initiation">
        <sequence resource="EMBL-CDS" id="CAB66530"/>
    </conflict>
    <text>Extended N-terminus.</text>
</comment>
<comment type="online information" name="Atlas of Genetics and Cytogenetics in Oncology and Haematology">
    <link uri="https://atlasgeneticsoncology.org/gene/41467/MYBBP1A"/>
</comment>
<evidence type="ECO:0000250" key="1">
    <source>
        <dbReference type="UniProtKB" id="Q7TPV4"/>
    </source>
</evidence>
<evidence type="ECO:0000256" key="2">
    <source>
        <dbReference type="SAM" id="MobiDB-lite"/>
    </source>
</evidence>
<evidence type="ECO:0000269" key="3">
    <source>
    </source>
</evidence>
<evidence type="ECO:0000269" key="4">
    <source>
    </source>
</evidence>
<evidence type="ECO:0000269" key="5">
    <source>
    </source>
</evidence>
<evidence type="ECO:0000303" key="6">
    <source>
    </source>
</evidence>
<evidence type="ECO:0000305" key="7"/>
<evidence type="ECO:0007744" key="8">
    <source>
    </source>
</evidence>
<evidence type="ECO:0007744" key="9">
    <source>
    </source>
</evidence>
<evidence type="ECO:0007744" key="10">
    <source>
    </source>
</evidence>
<evidence type="ECO:0007744" key="11">
    <source>
    </source>
</evidence>
<evidence type="ECO:0007744" key="12">
    <source>
    </source>
</evidence>
<evidence type="ECO:0007744" key="13">
    <source>
    </source>
</evidence>
<evidence type="ECO:0007744" key="14">
    <source>
    </source>
</evidence>
<evidence type="ECO:0007744" key="15">
    <source>
    </source>
</evidence>
<evidence type="ECO:0007744" key="16">
    <source>
    </source>
</evidence>
<evidence type="ECO:0007744" key="17">
    <source>
    </source>
</evidence>
<evidence type="ECO:0007744" key="18">
    <source>
    </source>
</evidence>
<evidence type="ECO:0007744" key="19">
    <source>
    </source>
</evidence>
<reference key="1">
    <citation type="journal article" date="1999" name="Genomics">
        <title>Molecular cloning and chromosomal mapping of the human homologue of MYB binding protein (P160) 1A (MYBBP1A) to 17p13.3.</title>
        <authorList>
            <person name="Keough R."/>
            <person name="Woollatt E."/>
            <person name="Crawford J."/>
            <person name="Sutherland G.R."/>
            <person name="Plummer S."/>
            <person name="Casey G."/>
            <person name="Gonda T.J."/>
        </authorList>
    </citation>
    <scope>NUCLEOTIDE SEQUENCE [MRNA] (ISOFORM 1)</scope>
    <source>
        <tissue>Placenta</tissue>
    </source>
</reference>
<reference key="2">
    <citation type="journal article" date="2004" name="Genome Res.">
        <title>The status, quality, and expansion of the NIH full-length cDNA project: the Mammalian Gene Collection (MGC).</title>
        <authorList>
            <consortium name="The MGC Project Team"/>
        </authorList>
    </citation>
    <scope>NUCLEOTIDE SEQUENCE [LARGE SCALE MRNA] (ISOFORM 1)</scope>
    <source>
        <tissue>Eye</tissue>
    </source>
</reference>
<reference key="3">
    <citation type="journal article" date="2001" name="Genome Res.">
        <title>Towards a catalog of human genes and proteins: sequencing and analysis of 500 novel complete protein coding human cDNAs.</title>
        <authorList>
            <person name="Wiemann S."/>
            <person name="Weil B."/>
            <person name="Wellenreuther R."/>
            <person name="Gassenhuber J."/>
            <person name="Glassl S."/>
            <person name="Ansorge W."/>
            <person name="Boecher M."/>
            <person name="Bloecker H."/>
            <person name="Bauersachs S."/>
            <person name="Blum H."/>
            <person name="Lauber J."/>
            <person name="Duesterhoeft A."/>
            <person name="Beyer A."/>
            <person name="Koehrer K."/>
            <person name="Strack N."/>
            <person name="Mewes H.-W."/>
            <person name="Ottenwaelder B."/>
            <person name="Obermaier B."/>
            <person name="Tampe J."/>
            <person name="Heubner D."/>
            <person name="Wambutt R."/>
            <person name="Korn B."/>
            <person name="Klein M."/>
            <person name="Poustka A."/>
        </authorList>
    </citation>
    <scope>NUCLEOTIDE SEQUENCE [LARGE SCALE MRNA] OF 82-1328 (ISOFORM 2)</scope>
    <source>
        <tissue>Amygdala</tissue>
    </source>
</reference>
<reference key="4">
    <citation type="journal article" date="2007" name="BMC Genomics">
        <title>The full-ORF clone resource of the German cDNA consortium.</title>
        <authorList>
            <person name="Bechtel S."/>
            <person name="Rosenfelder H."/>
            <person name="Duda A."/>
            <person name="Schmidt C.P."/>
            <person name="Ernst U."/>
            <person name="Wellenreuther R."/>
            <person name="Mehrle A."/>
            <person name="Schuster C."/>
            <person name="Bahr A."/>
            <person name="Bloecker H."/>
            <person name="Heubner D."/>
            <person name="Hoerlein A."/>
            <person name="Michel G."/>
            <person name="Wedler H."/>
            <person name="Koehrer K."/>
            <person name="Ottenwaelder B."/>
            <person name="Poustka A."/>
            <person name="Wiemann S."/>
            <person name="Schupp I."/>
        </authorList>
    </citation>
    <scope>NUCLEOTIDE SEQUENCE [LARGE SCALE MRNA] OF 875-1328 (ISOFORM 1)</scope>
    <source>
        <tissue>Testis</tissue>
    </source>
</reference>
<reference key="5">
    <citation type="journal article" date="2002" name="Mol. Biol. Cell">
        <title>Functional proteomic analysis of human nucleolus.</title>
        <authorList>
            <person name="Scherl A."/>
            <person name="Coute Y."/>
            <person name="Deon C."/>
            <person name="Calle A."/>
            <person name="Kindbeiter K."/>
            <person name="Sanchez J.-C."/>
            <person name="Greco A."/>
            <person name="Hochstrasser D.F."/>
            <person name="Diaz J.-J."/>
        </authorList>
    </citation>
    <scope>SUBCELLULAR LOCATION [LARGE SCALE ANALYSIS]</scope>
    <source>
        <tissue>Cervix carcinoma</tissue>
    </source>
</reference>
<reference key="6">
    <citation type="journal article" date="2006" name="Cell">
        <title>Global, in vivo, and site-specific phosphorylation dynamics in signaling networks.</title>
        <authorList>
            <person name="Olsen J.V."/>
            <person name="Blagoev B."/>
            <person name="Gnad F."/>
            <person name="Macek B."/>
            <person name="Kumar C."/>
            <person name="Mortensen P."/>
            <person name="Mann M."/>
        </authorList>
    </citation>
    <scope>PHOSPHORYLATION [LARGE SCALE ANALYSIS] AT SER-11 AND SER-775</scope>
    <scope>IDENTIFICATION BY MASS SPECTROMETRY [LARGE SCALE ANALYSIS]</scope>
    <source>
        <tissue>Cervix carcinoma</tissue>
    </source>
</reference>
<reference key="7">
    <citation type="journal article" date="2006" name="J. Biol. Chem.">
        <title>The WSTF-SNF2h chromatin remodeling complex interacts with several nuclear proteins in transcription.</title>
        <authorList>
            <person name="Cavellan E."/>
            <person name="Asp P."/>
            <person name="Percipalle P."/>
            <person name="Oestlund Farrants A.-K."/>
        </authorList>
    </citation>
    <scope>IDENTIFICATION IN THE B-WICH COMPLEX</scope>
</reference>
<reference key="8">
    <citation type="journal article" date="2006" name="Nat. Biotechnol.">
        <title>A probability-based approach for high-throughput protein phosphorylation analysis and site localization.</title>
        <authorList>
            <person name="Beausoleil S.A."/>
            <person name="Villen J."/>
            <person name="Gerber S.A."/>
            <person name="Rush J."/>
            <person name="Gygi S.P."/>
        </authorList>
    </citation>
    <scope>PHOSPHORYLATION [LARGE SCALE ANALYSIS] AT SER-11 AND SER-1163</scope>
    <scope>IDENTIFICATION BY MASS SPECTROMETRY [LARGE SCALE ANALYSIS]</scope>
    <source>
        <tissue>Cervix carcinoma</tissue>
    </source>
</reference>
<reference key="9">
    <citation type="journal article" date="2008" name="J. Proteome Res.">
        <title>Combining protein-based IMAC, peptide-based IMAC, and MudPIT for efficient phosphoproteomic analysis.</title>
        <authorList>
            <person name="Cantin G.T."/>
            <person name="Yi W."/>
            <person name="Lu B."/>
            <person name="Park S.K."/>
            <person name="Xu T."/>
            <person name="Lee J.-D."/>
            <person name="Yates J.R. III"/>
        </authorList>
    </citation>
    <scope>PHOSPHORYLATION [LARGE SCALE ANALYSIS] AT SER-1186</scope>
    <scope>IDENTIFICATION BY MASS SPECTROMETRY [LARGE SCALE ANALYSIS]</scope>
    <source>
        <tissue>Cervix carcinoma</tissue>
    </source>
</reference>
<reference key="10">
    <citation type="journal article" date="2008" name="Mol. Cell">
        <title>Kinase-selective enrichment enables quantitative phosphoproteomics of the kinome across the cell cycle.</title>
        <authorList>
            <person name="Daub H."/>
            <person name="Olsen J.V."/>
            <person name="Bairlein M."/>
            <person name="Gnad F."/>
            <person name="Oppermann F.S."/>
            <person name="Korner R."/>
            <person name="Greff Z."/>
            <person name="Keri G."/>
            <person name="Stemmann O."/>
            <person name="Mann M."/>
        </authorList>
    </citation>
    <scope>PHOSPHORYLATION [LARGE SCALE ANALYSIS] AT SER-11; SER-775 AND SER-1290</scope>
    <scope>IDENTIFICATION BY MASS SPECTROMETRY [LARGE SCALE ANALYSIS]</scope>
    <source>
        <tissue>Cervix carcinoma</tissue>
    </source>
</reference>
<reference key="11">
    <citation type="journal article" date="2008" name="Proc. Natl. Acad. Sci. U.S.A.">
        <title>A quantitative atlas of mitotic phosphorylation.</title>
        <authorList>
            <person name="Dephoure N."/>
            <person name="Zhou C."/>
            <person name="Villen J."/>
            <person name="Beausoleil S.A."/>
            <person name="Bakalarski C.E."/>
            <person name="Elledge S.J."/>
            <person name="Gygi S.P."/>
        </authorList>
    </citation>
    <scope>PHOSPHORYLATION [LARGE SCALE ANALYSIS] AT SER-11; SER-775; SER-1159; SER-1163; SER-1186; THR-1190; THR-1196; SER-1207; SER-1248; SER-1267; SER-1303; SER-1308 AND SER-1314</scope>
    <scope>IDENTIFICATION BY MASS SPECTROMETRY [LARGE SCALE ANALYSIS]</scope>
    <source>
        <tissue>Cervix carcinoma</tissue>
    </source>
</reference>
<reference key="12">
    <citation type="journal article" date="2009" name="Anal. Chem.">
        <title>Lys-N and trypsin cover complementary parts of the phosphoproteome in a refined SCX-based approach.</title>
        <authorList>
            <person name="Gauci S."/>
            <person name="Helbig A.O."/>
            <person name="Slijper M."/>
            <person name="Krijgsveld J."/>
            <person name="Heck A.J."/>
            <person name="Mohammed S."/>
        </authorList>
    </citation>
    <scope>IDENTIFICATION BY MASS SPECTROMETRY [LARGE SCALE ANALYSIS]</scope>
</reference>
<reference key="13">
    <citation type="journal article" date="2009" name="Mol. Cell. Proteomics">
        <title>Large-scale proteomics analysis of the human kinome.</title>
        <authorList>
            <person name="Oppermann F.S."/>
            <person name="Gnad F."/>
            <person name="Olsen J.V."/>
            <person name="Hornberger R."/>
            <person name="Greff Z."/>
            <person name="Keri G."/>
            <person name="Mann M."/>
            <person name="Daub H."/>
        </authorList>
    </citation>
    <scope>PHOSPHORYLATION [LARGE SCALE ANALYSIS] AT SER-775</scope>
    <scope>IDENTIFICATION BY MASS SPECTROMETRY [LARGE SCALE ANALYSIS]</scope>
</reference>
<reference key="14">
    <citation type="journal article" date="2009" name="Sci. Signal.">
        <title>Quantitative phosphoproteomic analysis of T cell receptor signaling reveals system-wide modulation of protein-protein interactions.</title>
        <authorList>
            <person name="Mayya V."/>
            <person name="Lundgren D.H."/>
            <person name="Hwang S.-I."/>
            <person name="Rezaul K."/>
            <person name="Wu L."/>
            <person name="Eng J.K."/>
            <person name="Rodionov V."/>
            <person name="Han D.K."/>
        </authorList>
    </citation>
    <scope>PHOSPHORYLATION [LARGE SCALE ANALYSIS] AT SER-775 AND SER-1267</scope>
    <scope>IDENTIFICATION BY MASS SPECTROMETRY [LARGE SCALE ANALYSIS]</scope>
    <source>
        <tissue>Leukemic T-cell</tissue>
    </source>
</reference>
<reference key="15">
    <citation type="journal article" date="2009" name="Science">
        <title>Lysine acetylation targets protein complexes and co-regulates major cellular functions.</title>
        <authorList>
            <person name="Choudhary C."/>
            <person name="Kumar C."/>
            <person name="Gnad F."/>
            <person name="Nielsen M.L."/>
            <person name="Rehman M."/>
            <person name="Walther T.C."/>
            <person name="Olsen J.V."/>
            <person name="Mann M."/>
        </authorList>
    </citation>
    <scope>ACETYLATION [LARGE SCALE ANALYSIS] AT LYS-71 AND LYS-158</scope>
    <scope>IDENTIFICATION BY MASS SPECTROMETRY [LARGE SCALE ANALYSIS]</scope>
</reference>
<reference key="16">
    <citation type="journal article" date="2010" name="Sci. Signal.">
        <title>Quantitative phosphoproteomics reveals widespread full phosphorylation site occupancy during mitosis.</title>
        <authorList>
            <person name="Olsen J.V."/>
            <person name="Vermeulen M."/>
            <person name="Santamaria A."/>
            <person name="Kumar C."/>
            <person name="Miller M.L."/>
            <person name="Jensen L.J."/>
            <person name="Gnad F."/>
            <person name="Cox J."/>
            <person name="Jensen T.S."/>
            <person name="Nigg E.A."/>
            <person name="Brunak S."/>
            <person name="Mann M."/>
        </authorList>
    </citation>
    <scope>PHOSPHORYLATION [LARGE SCALE ANALYSIS] AT SER-11; SER-775; SER-1163; SER-1267; SER-1290; SER-1308; SER-1310 AND SER-1314</scope>
    <scope>IDENTIFICATION BY MASS SPECTROMETRY [LARGE SCALE ANALYSIS]</scope>
    <source>
        <tissue>Cervix carcinoma</tissue>
    </source>
</reference>
<reference key="17">
    <citation type="journal article" date="2011" name="BMC Syst. Biol.">
        <title>Initial characterization of the human central proteome.</title>
        <authorList>
            <person name="Burkard T.R."/>
            <person name="Planyavsky M."/>
            <person name="Kaupe I."/>
            <person name="Breitwieser F.P."/>
            <person name="Buerckstuemmer T."/>
            <person name="Bennett K.L."/>
            <person name="Superti-Furga G."/>
            <person name="Colinge J."/>
        </authorList>
    </citation>
    <scope>IDENTIFICATION BY MASS SPECTROMETRY [LARGE SCALE ANALYSIS]</scope>
</reference>
<reference key="18">
    <citation type="journal article" date="2011" name="Sci. Signal.">
        <title>System-wide temporal characterization of the proteome and phosphoproteome of human embryonic stem cell differentiation.</title>
        <authorList>
            <person name="Rigbolt K.T."/>
            <person name="Prokhorova T.A."/>
            <person name="Akimov V."/>
            <person name="Henningsen J."/>
            <person name="Johansen P.T."/>
            <person name="Kratchmarova I."/>
            <person name="Kassem M."/>
            <person name="Mann M."/>
            <person name="Olsen J.V."/>
            <person name="Blagoev B."/>
        </authorList>
    </citation>
    <scope>PHOSPHORYLATION [LARGE SCALE ANALYSIS] AT SER-775; SER-1163; SER-1232; SER-1267; THR-1269 AND SER-1290</scope>
    <scope>IDENTIFICATION BY MASS SPECTROMETRY [LARGE SCALE ANALYSIS]</scope>
</reference>
<reference key="19">
    <citation type="journal article" date="2013" name="J. Proteome Res.">
        <title>Toward a comprehensive characterization of a human cancer cell phosphoproteome.</title>
        <authorList>
            <person name="Zhou H."/>
            <person name="Di Palma S."/>
            <person name="Preisinger C."/>
            <person name="Peng M."/>
            <person name="Polat A.N."/>
            <person name="Heck A.J."/>
            <person name="Mohammed S."/>
        </authorList>
    </citation>
    <scope>PHOSPHORYLATION [LARGE SCALE ANALYSIS] AT SER-11; SER-1159; SER-1163; SER-1186; THR-1239; SER-1241; SER-1248; SER-1267; SER-1290; SER-1308; SER-1310 AND SER-1314</scope>
    <scope>IDENTIFICATION BY MASS SPECTROMETRY [LARGE SCALE ANALYSIS]</scope>
    <source>
        <tissue>Cervix carcinoma</tissue>
        <tissue>Erythroleukemia</tissue>
    </source>
</reference>
<reference key="20">
    <citation type="journal article" date="2017" name="Dev. Cell">
        <title>PWP1 Mediates Nutrient-Dependent Growth Control through Nucleolar Regulation of Ribosomal Gene Expression.</title>
        <authorList>
            <person name="Liu Y."/>
            <person name="Mattila J."/>
            <person name="Ventelae S."/>
            <person name="Yadav L."/>
            <person name="Zhang W."/>
            <person name="Lamichane N."/>
            <person name="Sundstroem J."/>
            <person name="Kauko O."/>
            <person name="Grenman R."/>
            <person name="Varjosalo M."/>
            <person name="Westermarck J."/>
            <person name="Hietakangas V."/>
        </authorList>
    </citation>
    <scope>FUNCTION</scope>
</reference>
<reference key="21">
    <citation type="journal article" date="2017" name="Nat. Struct. Mol. Biol.">
        <title>Site-specific mapping of the human SUMO proteome reveals co-modification with phosphorylation.</title>
        <authorList>
            <person name="Hendriks I.A."/>
            <person name="Lyon D."/>
            <person name="Young C."/>
            <person name="Jensen L.J."/>
            <person name="Vertegaal A.C."/>
            <person name="Nielsen M.L."/>
        </authorList>
    </citation>
    <scope>SUMOYLATION [LARGE SCALE ANALYSIS] AT LYS-1148</scope>
    <scope>IDENTIFICATION BY MASS SPECTROMETRY [LARGE SCALE ANALYSIS]</scope>
</reference>
<keyword id="KW-0007">Acetylation</keyword>
<keyword id="KW-0010">Activator</keyword>
<keyword id="KW-0025">Alternative splicing</keyword>
<keyword id="KW-0090">Biological rhythms</keyword>
<keyword id="KW-0164">Citrullination</keyword>
<keyword id="KW-0963">Cytoplasm</keyword>
<keyword id="KW-1017">Isopeptide bond</keyword>
<keyword id="KW-0539">Nucleus</keyword>
<keyword id="KW-0597">Phosphoprotein</keyword>
<keyword id="KW-1267">Proteomics identification</keyword>
<keyword id="KW-1185">Reference proteome</keyword>
<keyword id="KW-0678">Repressor</keyword>
<keyword id="KW-0690">Ribosome biogenesis</keyword>
<keyword id="KW-0804">Transcription</keyword>
<keyword id="KW-0805">Transcription regulation</keyword>
<keyword id="KW-0832">Ubl conjugation</keyword>
<feature type="chain" id="PRO_0000096255" description="Myb-binding protein 1A">
    <location>
        <begin position="1"/>
        <end position="1328"/>
    </location>
</feature>
<feature type="region of interest" description="Interaction with MYB" evidence="1">
    <location>
        <begin position="1"/>
        <end position="582"/>
    </location>
</feature>
<feature type="region of interest" description="Disordered" evidence="2">
    <location>
        <begin position="1"/>
        <end position="22"/>
    </location>
</feature>
<feature type="region of interest" description="Disordered" evidence="2">
    <location>
        <begin position="698"/>
        <end position="753"/>
    </location>
</feature>
<feature type="region of interest" description="Disordered" evidence="2">
    <location>
        <begin position="1146"/>
        <end position="1292"/>
    </location>
</feature>
<feature type="region of interest" description="Required for nuclear and nucleolar localization" evidence="1">
    <location>
        <begin position="1151"/>
        <end position="1328"/>
    </location>
</feature>
<feature type="region of interest" description="Disordered" evidence="2">
    <location>
        <begin position="1306"/>
        <end position="1328"/>
    </location>
</feature>
<feature type="short sequence motif" description="Nuclear export signal 1" evidence="1">
    <location>
        <begin position="240"/>
        <end position="258"/>
    </location>
</feature>
<feature type="short sequence motif" description="Nuclear export signal 2" evidence="1">
    <location>
        <begin position="263"/>
        <end position="281"/>
    </location>
</feature>
<feature type="compositionally biased region" description="Basic and acidic residues" evidence="2">
    <location>
        <begin position="703"/>
        <end position="721"/>
    </location>
</feature>
<feature type="compositionally biased region" description="Acidic residues" evidence="2">
    <location>
        <begin position="734"/>
        <end position="752"/>
    </location>
</feature>
<feature type="compositionally biased region" description="Basic and acidic residues" evidence="2">
    <location>
        <begin position="1147"/>
        <end position="1156"/>
    </location>
</feature>
<feature type="compositionally biased region" description="Basic residues" evidence="2">
    <location>
        <begin position="1166"/>
        <end position="1184"/>
    </location>
</feature>
<feature type="compositionally biased region" description="Basic residues" evidence="2">
    <location>
        <begin position="1209"/>
        <end position="1218"/>
    </location>
</feature>
<feature type="compositionally biased region" description="Basic residues" evidence="2">
    <location>
        <begin position="1316"/>
        <end position="1328"/>
    </location>
</feature>
<feature type="modified residue" description="Phosphoserine" evidence="8 9 11 12 16 18">
    <location>
        <position position="11"/>
    </location>
</feature>
<feature type="modified residue" description="N6-acetyllysine" evidence="14">
    <location>
        <position position="71"/>
    </location>
</feature>
<feature type="modified residue" description="N6-acetyllysine" evidence="14">
    <location>
        <position position="158"/>
    </location>
</feature>
<feature type="modified residue" description="Phosphoserine" evidence="9 11 12 13 15 16 17">
    <location>
        <position position="775"/>
    </location>
</feature>
<feature type="modified residue" description="Phosphoserine" evidence="11 18">
    <location>
        <position position="1159"/>
    </location>
</feature>
<feature type="modified residue" description="Phosphoserine" evidence="8 11 16 17 18">
    <location>
        <position position="1163"/>
    </location>
</feature>
<feature type="modified residue" description="Phosphoserine" evidence="10 11 18">
    <location>
        <position position="1186"/>
    </location>
</feature>
<feature type="modified residue" description="Phosphothreonine" evidence="11">
    <location>
        <position position="1190"/>
    </location>
</feature>
<feature type="modified residue" description="Phosphothreonine" evidence="11">
    <location>
        <position position="1196"/>
    </location>
</feature>
<feature type="modified residue" description="Phosphoserine" evidence="11">
    <location>
        <position position="1207"/>
    </location>
</feature>
<feature type="modified residue" description="Phosphoserine" evidence="17">
    <location>
        <position position="1232"/>
    </location>
</feature>
<feature type="modified residue" description="Phosphothreonine" evidence="18">
    <location>
        <position position="1239"/>
    </location>
</feature>
<feature type="modified residue" description="Phosphoserine" evidence="18">
    <location>
        <position position="1241"/>
    </location>
</feature>
<feature type="modified residue" description="Phosphothreonine" evidence="1">
    <location>
        <position position="1244"/>
    </location>
</feature>
<feature type="modified residue" description="Phosphoserine" evidence="11 18">
    <location>
        <position position="1248"/>
    </location>
</feature>
<feature type="modified residue" description="Phosphoserine" evidence="11 15 16 17 18">
    <location>
        <position position="1267"/>
    </location>
</feature>
<feature type="modified residue" description="Phosphothreonine" evidence="17">
    <location>
        <position position="1269"/>
    </location>
</feature>
<feature type="modified residue" description="Phosphoserine" evidence="12 16 17 18">
    <location>
        <position position="1290"/>
    </location>
</feature>
<feature type="modified residue" description="Phosphoserine" evidence="11">
    <location>
        <position position="1303"/>
    </location>
</feature>
<feature type="modified residue" description="Citrulline" evidence="1">
    <location>
        <position position="1307"/>
    </location>
</feature>
<feature type="modified residue" description="Phosphoserine" evidence="11 16 18">
    <location>
        <position position="1308"/>
    </location>
</feature>
<feature type="modified residue" description="Phosphoserine" evidence="16 18">
    <location>
        <position position="1310"/>
    </location>
</feature>
<feature type="modified residue" description="Phosphoserine" evidence="11 16 18">
    <location>
        <position position="1314"/>
    </location>
</feature>
<feature type="cross-link" description="Glycyl lysine isopeptide (Lys-Gly) (interchain with G-Cter in SUMO2)" evidence="19">
    <location>
        <position position="1148"/>
    </location>
</feature>
<feature type="splice variant" id="VSP_014786" description="In isoform 2." evidence="6">
    <original>VRKAGKP</original>
    <variation>TLRFTISSSKK</variation>
    <location>
        <begin position="1322"/>
        <end position="1328"/>
    </location>
</feature>
<feature type="sequence variant" id="VAR_023064" description="In dbSNP:rs3809849.">
    <original>Q</original>
    <variation>E</variation>
    <location>
        <position position="8"/>
    </location>
</feature>
<feature type="sequence variant" id="VAR_051156" description="In dbSNP:rs899440.">
    <original>H</original>
    <variation>Y</variation>
    <location>
        <position position="680"/>
    </location>
</feature>
<feature type="sequence variant" id="VAR_051157" description="In dbSNP:rs879797.">
    <original>H</original>
    <variation>P</variation>
    <location>
        <position position="958"/>
    </location>
</feature>
<feature type="sequence variant" id="VAR_051158" description="In dbSNP:rs9905742.">
    <original>M</original>
    <variation>L</variation>
    <location>
        <position position="1208"/>
    </location>
</feature>
<feature type="sequence conflict" description="In Ref. 1; AAF33021." evidence="7" ref="1">
    <original>R</original>
    <variation>H</variation>
    <location>
        <position position="307"/>
    </location>
</feature>
<feature type="sequence conflict" description="In Ref. 1; AAF33021." evidence="7" ref="1">
    <original>R</original>
    <variation>H</variation>
    <location>
        <position position="570"/>
    </location>
</feature>
<feature type="sequence conflict" description="In Ref. 1; AAF33021." evidence="7" ref="1">
    <original>L</original>
    <variation>F</variation>
    <location>
        <position position="601"/>
    </location>
</feature>
<feature type="sequence conflict" description="In Ref. 2; AAH50546." evidence="7" ref="2">
    <original>H</original>
    <variation>R</variation>
    <location>
        <position position="1028"/>
    </location>
</feature>
<accession>Q9BQG0</accession>
<accession>Q86VM3</accession>
<accession>Q9BW49</accession>
<accession>Q9P0V5</accession>
<accession>Q9UF99</accession>
<organism>
    <name type="scientific">Homo sapiens</name>
    <name type="common">Human</name>
    <dbReference type="NCBI Taxonomy" id="9606"/>
    <lineage>
        <taxon>Eukaryota</taxon>
        <taxon>Metazoa</taxon>
        <taxon>Chordata</taxon>
        <taxon>Craniata</taxon>
        <taxon>Vertebrata</taxon>
        <taxon>Euteleostomi</taxon>
        <taxon>Mammalia</taxon>
        <taxon>Eutheria</taxon>
        <taxon>Euarchontoglires</taxon>
        <taxon>Primates</taxon>
        <taxon>Haplorrhini</taxon>
        <taxon>Catarrhini</taxon>
        <taxon>Hominidae</taxon>
        <taxon>Homo</taxon>
    </lineage>
</organism>
<protein>
    <recommendedName>
        <fullName>Myb-binding protein 1A</fullName>
    </recommendedName>
</protein>
<proteinExistence type="evidence at protein level"/>
<name>MBB1A_HUMAN</name>
<gene>
    <name type="primary">MYBBP1A</name>
    <name type="synonym">P160</name>
</gene>
<dbReference type="EMBL" id="AF147709">
    <property type="protein sequence ID" value="AAF33021.1"/>
    <property type="molecule type" value="mRNA"/>
</dbReference>
<dbReference type="EMBL" id="BC000641">
    <property type="protein sequence ID" value="AAH00641.2"/>
    <property type="molecule type" value="mRNA"/>
</dbReference>
<dbReference type="EMBL" id="BC050546">
    <property type="protein sequence ID" value="AAH50546.1"/>
    <property type="molecule type" value="mRNA"/>
</dbReference>
<dbReference type="EMBL" id="AL136595">
    <property type="protein sequence ID" value="CAB66530.1"/>
    <property type="status" value="ALT_INIT"/>
    <property type="molecule type" value="mRNA"/>
</dbReference>
<dbReference type="EMBL" id="AL133098">
    <property type="protein sequence ID" value="CAB61409.1"/>
    <property type="molecule type" value="mRNA"/>
</dbReference>
<dbReference type="CCDS" id="CCDS11046.1">
    <molecule id="Q9BQG0-1"/>
</dbReference>
<dbReference type="CCDS" id="CCDS42238.1">
    <molecule id="Q9BQG0-2"/>
</dbReference>
<dbReference type="PIR" id="T42680">
    <property type="entry name" value="T42680"/>
</dbReference>
<dbReference type="RefSeq" id="NP_001099008.1">
    <molecule id="Q9BQG0-2"/>
    <property type="nucleotide sequence ID" value="NM_001105538.2"/>
</dbReference>
<dbReference type="RefSeq" id="NP_055335.2">
    <molecule id="Q9BQG0-1"/>
    <property type="nucleotide sequence ID" value="NM_014520.4"/>
</dbReference>
<dbReference type="BioGRID" id="115770">
    <property type="interactions" value="481"/>
</dbReference>
<dbReference type="ComplexPortal" id="CPX-1099">
    <property type="entry name" value="B-WICH chromatin remodelling complex"/>
</dbReference>
<dbReference type="CORUM" id="Q9BQG0"/>
<dbReference type="FunCoup" id="Q9BQG0">
    <property type="interactions" value="3028"/>
</dbReference>
<dbReference type="IntAct" id="Q9BQG0">
    <property type="interactions" value="264"/>
</dbReference>
<dbReference type="MINT" id="Q9BQG0"/>
<dbReference type="STRING" id="9606.ENSP00000370968"/>
<dbReference type="GlyCosmos" id="Q9BQG0">
    <property type="glycosylation" value="5 sites, 1 glycan"/>
</dbReference>
<dbReference type="GlyGen" id="Q9BQG0">
    <property type="glycosylation" value="7 sites, 1 O-linked glycan (6 sites)"/>
</dbReference>
<dbReference type="iPTMnet" id="Q9BQG0"/>
<dbReference type="MetOSite" id="Q9BQG0"/>
<dbReference type="PhosphoSitePlus" id="Q9BQG0"/>
<dbReference type="SwissPalm" id="Q9BQG0"/>
<dbReference type="BioMuta" id="MYBBP1A"/>
<dbReference type="DMDM" id="71153825"/>
<dbReference type="CPTAC" id="CPTAC-980"/>
<dbReference type="jPOST" id="Q9BQG0"/>
<dbReference type="MassIVE" id="Q9BQG0"/>
<dbReference type="PaxDb" id="9606-ENSP00000370968"/>
<dbReference type="PeptideAtlas" id="Q9BQG0"/>
<dbReference type="ProteomicsDB" id="78674">
    <molecule id="Q9BQG0-1"/>
</dbReference>
<dbReference type="ProteomicsDB" id="78675">
    <molecule id="Q9BQG0-2"/>
</dbReference>
<dbReference type="Pumba" id="Q9BQG0"/>
<dbReference type="Antibodypedia" id="23280">
    <property type="antibodies" value="273 antibodies from 31 providers"/>
</dbReference>
<dbReference type="DNASU" id="10514"/>
<dbReference type="Ensembl" id="ENST00000254718.9">
    <molecule id="Q9BQG0-1"/>
    <property type="protein sequence ID" value="ENSP00000254718.4"/>
    <property type="gene ID" value="ENSG00000132382.15"/>
</dbReference>
<dbReference type="Ensembl" id="ENST00000381556.6">
    <molecule id="Q9BQG0-2"/>
    <property type="protein sequence ID" value="ENSP00000370968.2"/>
    <property type="gene ID" value="ENSG00000132382.15"/>
</dbReference>
<dbReference type="GeneID" id="10514"/>
<dbReference type="KEGG" id="hsa:10514"/>
<dbReference type="MANE-Select" id="ENST00000254718.9">
    <property type="protein sequence ID" value="ENSP00000254718.4"/>
    <property type="RefSeq nucleotide sequence ID" value="NM_014520.4"/>
    <property type="RefSeq protein sequence ID" value="NP_055335.2"/>
</dbReference>
<dbReference type="UCSC" id="uc002fxz.5">
    <molecule id="Q9BQG0-1"/>
    <property type="organism name" value="human"/>
</dbReference>
<dbReference type="AGR" id="HGNC:7546"/>
<dbReference type="CTD" id="10514"/>
<dbReference type="DisGeNET" id="10514"/>
<dbReference type="GeneCards" id="MYBBP1A"/>
<dbReference type="HGNC" id="HGNC:7546">
    <property type="gene designation" value="MYBBP1A"/>
</dbReference>
<dbReference type="HPA" id="ENSG00000132382">
    <property type="expression patterns" value="Low tissue specificity"/>
</dbReference>
<dbReference type="MIM" id="604885">
    <property type="type" value="gene"/>
</dbReference>
<dbReference type="neXtProt" id="NX_Q9BQG0"/>
<dbReference type="OpenTargets" id="ENSG00000132382"/>
<dbReference type="PharmGKB" id="PA31346"/>
<dbReference type="VEuPathDB" id="HostDB:ENSG00000132382"/>
<dbReference type="eggNOG" id="KOG1926">
    <property type="taxonomic scope" value="Eukaryota"/>
</dbReference>
<dbReference type="GeneTree" id="ENSGT00390000017457"/>
<dbReference type="HOGENOM" id="CLU_005997_1_0_1"/>
<dbReference type="InParanoid" id="Q9BQG0"/>
<dbReference type="OMA" id="VWKHDDP"/>
<dbReference type="OrthoDB" id="342531at2759"/>
<dbReference type="PAN-GO" id="Q9BQG0">
    <property type="GO annotations" value="3 GO annotations based on evolutionary models"/>
</dbReference>
<dbReference type="PhylomeDB" id="Q9BQG0"/>
<dbReference type="TreeFam" id="TF317401"/>
<dbReference type="BRENDA" id="2.3.1.48">
    <property type="organism ID" value="2681"/>
</dbReference>
<dbReference type="PathwayCommons" id="Q9BQG0"/>
<dbReference type="Reactome" id="R-HSA-5250924">
    <property type="pathway name" value="B-WICH complex positively regulates rRNA expression"/>
</dbReference>
<dbReference type="SignaLink" id="Q9BQG0"/>
<dbReference type="SIGNOR" id="Q9BQG0"/>
<dbReference type="BioGRID-ORCS" id="10514">
    <property type="hits" value="653 hits in 1163 CRISPR screens"/>
</dbReference>
<dbReference type="CD-CODE" id="232F8A39">
    <property type="entry name" value="P-body"/>
</dbReference>
<dbReference type="CD-CODE" id="91857CE7">
    <property type="entry name" value="Nucleolus"/>
</dbReference>
<dbReference type="ChiTaRS" id="MYBBP1A">
    <property type="organism name" value="human"/>
</dbReference>
<dbReference type="GeneWiki" id="MYBBP1A"/>
<dbReference type="GenomeRNAi" id="10514"/>
<dbReference type="Pharos" id="Q9BQG0">
    <property type="development level" value="Tbio"/>
</dbReference>
<dbReference type="PRO" id="PR:Q9BQG0"/>
<dbReference type="Proteomes" id="UP000005640">
    <property type="component" value="Chromosome 17"/>
</dbReference>
<dbReference type="RNAct" id="Q9BQG0">
    <property type="molecule type" value="protein"/>
</dbReference>
<dbReference type="Bgee" id="ENSG00000132382">
    <property type="expression patterns" value="Expressed in sural nerve and 142 other cell types or tissues"/>
</dbReference>
<dbReference type="ExpressionAtlas" id="Q9BQG0">
    <property type="expression patterns" value="baseline and differential"/>
</dbReference>
<dbReference type="GO" id="GO:0110016">
    <property type="term" value="C:B-WICH complex"/>
    <property type="evidence" value="ECO:0000314"/>
    <property type="project" value="ComplexPortal"/>
</dbReference>
<dbReference type="GO" id="GO:0005737">
    <property type="term" value="C:cytoplasm"/>
    <property type="evidence" value="ECO:0000250"/>
    <property type="project" value="UniProtKB"/>
</dbReference>
<dbReference type="GO" id="GO:0043231">
    <property type="term" value="C:intracellular membrane-bounded organelle"/>
    <property type="evidence" value="ECO:0000314"/>
    <property type="project" value="HPA"/>
</dbReference>
<dbReference type="GO" id="GO:0016020">
    <property type="term" value="C:membrane"/>
    <property type="evidence" value="ECO:0007005"/>
    <property type="project" value="UniProtKB"/>
</dbReference>
<dbReference type="GO" id="GO:0042564">
    <property type="term" value="C:NLS-dependent protein nuclear import complex"/>
    <property type="evidence" value="ECO:0000250"/>
    <property type="project" value="UniProtKB"/>
</dbReference>
<dbReference type="GO" id="GO:0005730">
    <property type="term" value="C:nucleolus"/>
    <property type="evidence" value="ECO:0000314"/>
    <property type="project" value="HPA"/>
</dbReference>
<dbReference type="GO" id="GO:0005654">
    <property type="term" value="C:nucleoplasm"/>
    <property type="evidence" value="ECO:0000304"/>
    <property type="project" value="Reactome"/>
</dbReference>
<dbReference type="GO" id="GO:0005634">
    <property type="term" value="C:nucleus"/>
    <property type="evidence" value="ECO:0000314"/>
    <property type="project" value="UniProtKB"/>
</dbReference>
<dbReference type="GO" id="GO:0070888">
    <property type="term" value="F:E-box binding"/>
    <property type="evidence" value="ECO:0007669"/>
    <property type="project" value="Ensembl"/>
</dbReference>
<dbReference type="GO" id="GO:0003723">
    <property type="term" value="F:RNA binding"/>
    <property type="evidence" value="ECO:0007005"/>
    <property type="project" value="UniProtKB"/>
</dbReference>
<dbReference type="GO" id="GO:0043565">
    <property type="term" value="F:sequence-specific DNA binding"/>
    <property type="evidence" value="ECO:0000318"/>
    <property type="project" value="GO_Central"/>
</dbReference>
<dbReference type="GO" id="GO:0003714">
    <property type="term" value="F:transcription corepressor activity"/>
    <property type="evidence" value="ECO:0000250"/>
    <property type="project" value="UniProtKB"/>
</dbReference>
<dbReference type="GO" id="GO:0042149">
    <property type="term" value="P:cellular response to glucose starvation"/>
    <property type="evidence" value="ECO:0000314"/>
    <property type="project" value="UniProtKB"/>
</dbReference>
<dbReference type="GO" id="GO:0006338">
    <property type="term" value="P:chromatin remodeling"/>
    <property type="evidence" value="ECO:0000303"/>
    <property type="project" value="ComplexPortal"/>
</dbReference>
<dbReference type="GO" id="GO:0032922">
    <property type="term" value="P:circadian regulation of gene expression"/>
    <property type="evidence" value="ECO:0000250"/>
    <property type="project" value="UniProtKB"/>
</dbReference>
<dbReference type="GO" id="GO:0072332">
    <property type="term" value="P:intrinsic apoptotic signaling pathway by p53 class mediator"/>
    <property type="evidence" value="ECO:0000315"/>
    <property type="project" value="UniProtKB"/>
</dbReference>
<dbReference type="GO" id="GO:0045892">
    <property type="term" value="P:negative regulation of DNA-templated transcription"/>
    <property type="evidence" value="ECO:0000250"/>
    <property type="project" value="UniProtKB"/>
</dbReference>
<dbReference type="GO" id="GO:0001649">
    <property type="term" value="P:osteoblast differentiation"/>
    <property type="evidence" value="ECO:0007005"/>
    <property type="project" value="UniProtKB"/>
</dbReference>
<dbReference type="GO" id="GO:2000210">
    <property type="term" value="P:positive regulation of anoikis"/>
    <property type="evidence" value="ECO:0000315"/>
    <property type="project" value="CACAO"/>
</dbReference>
<dbReference type="GO" id="GO:0045943">
    <property type="term" value="P:positive regulation of transcription by RNA polymerase I"/>
    <property type="evidence" value="ECO:0000303"/>
    <property type="project" value="ComplexPortal"/>
</dbReference>
<dbReference type="GO" id="GO:0045944">
    <property type="term" value="P:positive regulation of transcription by RNA polymerase II"/>
    <property type="evidence" value="ECO:0000303"/>
    <property type="project" value="ComplexPortal"/>
</dbReference>
<dbReference type="GO" id="GO:0045945">
    <property type="term" value="P:positive regulation of transcription by RNA polymerase III"/>
    <property type="evidence" value="ECO:0000314"/>
    <property type="project" value="ComplexPortal"/>
</dbReference>
<dbReference type="GO" id="GO:0006355">
    <property type="term" value="P:regulation of DNA-templated transcription"/>
    <property type="evidence" value="ECO:0000304"/>
    <property type="project" value="ProtInc"/>
</dbReference>
<dbReference type="GO" id="GO:1903450">
    <property type="term" value="P:regulation of G1 to G0 transition"/>
    <property type="evidence" value="ECO:0000315"/>
    <property type="project" value="UniProtKB"/>
</dbReference>
<dbReference type="GO" id="GO:0022904">
    <property type="term" value="P:respiratory electron transport chain"/>
    <property type="evidence" value="ECO:0007669"/>
    <property type="project" value="Ensembl"/>
</dbReference>
<dbReference type="GO" id="GO:0042254">
    <property type="term" value="P:ribosome biogenesis"/>
    <property type="evidence" value="ECO:0007669"/>
    <property type="project" value="UniProtKB-KW"/>
</dbReference>
<dbReference type="Gene3D" id="1.25.10.10">
    <property type="entry name" value="Leucine-rich Repeat Variant"/>
    <property type="match status" value="1"/>
</dbReference>
<dbReference type="InterPro" id="IPR011989">
    <property type="entry name" value="ARM-like"/>
</dbReference>
<dbReference type="InterPro" id="IPR016024">
    <property type="entry name" value="ARM-type_fold"/>
</dbReference>
<dbReference type="InterPro" id="IPR007015">
    <property type="entry name" value="DNA_pol_V/MYBBP1A"/>
</dbReference>
<dbReference type="PANTHER" id="PTHR13213:SF2">
    <property type="entry name" value="MYB-BINDING PROTEIN 1A"/>
    <property type="match status" value="1"/>
</dbReference>
<dbReference type="PANTHER" id="PTHR13213">
    <property type="entry name" value="MYB-BINDING PROTEIN 1A FAMILY MEMBER"/>
    <property type="match status" value="1"/>
</dbReference>
<dbReference type="Pfam" id="PF04931">
    <property type="entry name" value="DNA_pol_phi"/>
    <property type="match status" value="1"/>
</dbReference>
<dbReference type="SUPFAM" id="SSF48371">
    <property type="entry name" value="ARM repeat"/>
    <property type="match status" value="1"/>
</dbReference>